<keyword id="KW-0687">Ribonucleoprotein</keyword>
<keyword id="KW-0689">Ribosomal protein</keyword>
<keyword id="KW-0694">RNA-binding</keyword>
<keyword id="KW-0699">rRNA-binding</keyword>
<reference key="1">
    <citation type="journal article" date="2008" name="Proc. Natl. Acad. Sci. U.S.A.">
        <title>Complete genome of the uncultured termite group 1 bacteria in a single host protist cell.</title>
        <authorList>
            <person name="Hongoh Y."/>
            <person name="Sharma V.K."/>
            <person name="Prakash T."/>
            <person name="Noda S."/>
            <person name="Taylor T.D."/>
            <person name="Kudo T."/>
            <person name="Sakaki Y."/>
            <person name="Toyoda A."/>
            <person name="Hattori M."/>
            <person name="Ohkuma M."/>
        </authorList>
    </citation>
    <scope>NUCLEOTIDE SEQUENCE [LARGE SCALE GENOMIC DNA]</scope>
</reference>
<proteinExistence type="inferred from homology"/>
<dbReference type="EMBL" id="AP009510">
    <property type="protein sequence ID" value="BAG13845.1"/>
    <property type="molecule type" value="Genomic_DNA"/>
</dbReference>
<dbReference type="RefSeq" id="WP_015423372.1">
    <property type="nucleotide sequence ID" value="NC_020419.1"/>
</dbReference>
<dbReference type="SMR" id="B1H013"/>
<dbReference type="STRING" id="471821.TGRD_362"/>
<dbReference type="KEGG" id="eti:RSTT_335"/>
<dbReference type="KEGG" id="rsd:TGRD_362"/>
<dbReference type="PATRIC" id="fig|471821.5.peg.591"/>
<dbReference type="HOGENOM" id="CLU_148710_0_0_0"/>
<dbReference type="OrthoDB" id="9812008at2"/>
<dbReference type="Proteomes" id="UP000001691">
    <property type="component" value="Chromosome"/>
</dbReference>
<dbReference type="GO" id="GO:0022627">
    <property type="term" value="C:cytosolic small ribosomal subunit"/>
    <property type="evidence" value="ECO:0007669"/>
    <property type="project" value="TreeGrafter"/>
</dbReference>
<dbReference type="GO" id="GO:0070181">
    <property type="term" value="F:small ribosomal subunit rRNA binding"/>
    <property type="evidence" value="ECO:0007669"/>
    <property type="project" value="TreeGrafter"/>
</dbReference>
<dbReference type="GO" id="GO:0003735">
    <property type="term" value="F:structural constituent of ribosome"/>
    <property type="evidence" value="ECO:0007669"/>
    <property type="project" value="InterPro"/>
</dbReference>
<dbReference type="GO" id="GO:0006412">
    <property type="term" value="P:translation"/>
    <property type="evidence" value="ECO:0007669"/>
    <property type="project" value="UniProtKB-UniRule"/>
</dbReference>
<dbReference type="Gene3D" id="4.10.640.10">
    <property type="entry name" value="Ribosomal protein S18"/>
    <property type="match status" value="1"/>
</dbReference>
<dbReference type="HAMAP" id="MF_00270">
    <property type="entry name" value="Ribosomal_bS18"/>
    <property type="match status" value="1"/>
</dbReference>
<dbReference type="InterPro" id="IPR001648">
    <property type="entry name" value="Ribosomal_bS18"/>
</dbReference>
<dbReference type="InterPro" id="IPR018275">
    <property type="entry name" value="Ribosomal_bS18_CS"/>
</dbReference>
<dbReference type="InterPro" id="IPR036870">
    <property type="entry name" value="Ribosomal_bS18_sf"/>
</dbReference>
<dbReference type="NCBIfam" id="TIGR00165">
    <property type="entry name" value="S18"/>
    <property type="match status" value="1"/>
</dbReference>
<dbReference type="PANTHER" id="PTHR13479">
    <property type="entry name" value="30S RIBOSOMAL PROTEIN S18"/>
    <property type="match status" value="1"/>
</dbReference>
<dbReference type="PANTHER" id="PTHR13479:SF40">
    <property type="entry name" value="SMALL RIBOSOMAL SUBUNIT PROTEIN BS18M"/>
    <property type="match status" value="1"/>
</dbReference>
<dbReference type="Pfam" id="PF01084">
    <property type="entry name" value="Ribosomal_S18"/>
    <property type="match status" value="1"/>
</dbReference>
<dbReference type="PRINTS" id="PR00974">
    <property type="entry name" value="RIBOSOMALS18"/>
</dbReference>
<dbReference type="SUPFAM" id="SSF46911">
    <property type="entry name" value="Ribosomal protein S18"/>
    <property type="match status" value="1"/>
</dbReference>
<dbReference type="PROSITE" id="PS00057">
    <property type="entry name" value="RIBOSOMAL_S18"/>
    <property type="match status" value="1"/>
</dbReference>
<name>RS18_ENDTX</name>
<sequence length="100" mass="11357">MTFIRKPAGQAKPQKYSTDAYGRPAGKFRRNGPIRKKVCRFCADKVEIDYKNLSLLHTFVTEKGKILSGRMTGTCAKHQRELDTAIKRARMIALLPFTVN</sequence>
<comment type="function">
    <text evidence="1">Binds as a heterodimer with protein bS6 to the central domain of the 16S rRNA, where it helps stabilize the platform of the 30S subunit.</text>
</comment>
<comment type="subunit">
    <text evidence="1">Part of the 30S ribosomal subunit. Forms a tight heterodimer with protein bS6.</text>
</comment>
<comment type="similarity">
    <text evidence="1">Belongs to the bacterial ribosomal protein bS18 family.</text>
</comment>
<organism>
    <name type="scientific">Endomicrobium trichonymphae</name>
    <dbReference type="NCBI Taxonomy" id="1408204"/>
    <lineage>
        <taxon>Bacteria</taxon>
        <taxon>Pseudomonadati</taxon>
        <taxon>Elusimicrobiota</taxon>
        <taxon>Endomicrobiia</taxon>
        <taxon>Endomicrobiales</taxon>
        <taxon>Endomicrobiaceae</taxon>
        <taxon>Candidatus Endomicrobiellum</taxon>
    </lineage>
</organism>
<accession>B1H013</accession>
<evidence type="ECO:0000255" key="1">
    <source>
        <dbReference type="HAMAP-Rule" id="MF_00270"/>
    </source>
</evidence>
<evidence type="ECO:0000256" key="2">
    <source>
        <dbReference type="SAM" id="MobiDB-lite"/>
    </source>
</evidence>
<evidence type="ECO:0000305" key="3"/>
<protein>
    <recommendedName>
        <fullName evidence="1">Small ribosomal subunit protein bS18</fullName>
    </recommendedName>
    <alternativeName>
        <fullName evidence="3">30S ribosomal protein S18</fullName>
    </alternativeName>
</protein>
<gene>
    <name evidence="1" type="primary">rpsR</name>
    <name type="ordered locus">TGRD_362</name>
</gene>
<feature type="chain" id="PRO_0000345559" description="Small ribosomal subunit protein bS18">
    <location>
        <begin position="1"/>
        <end position="100"/>
    </location>
</feature>
<feature type="region of interest" description="Disordered" evidence="2">
    <location>
        <begin position="1"/>
        <end position="23"/>
    </location>
</feature>